<feature type="chain" id="PRO_0000460838" description="Transcriptional coactivator YAP1">
    <location>
        <begin position="1"/>
        <end position="506"/>
    </location>
</feature>
<feature type="domain" description="WW 1" evidence="4">
    <location>
        <begin position="170"/>
        <end position="204"/>
    </location>
</feature>
<feature type="domain" description="WW 2" evidence="4">
    <location>
        <begin position="230"/>
        <end position="263"/>
    </location>
</feature>
<feature type="region of interest" description="Disordered" evidence="5">
    <location>
        <begin position="1"/>
        <end position="60"/>
    </location>
</feature>
<feature type="region of interest" description="Disordered" evidence="5">
    <location>
        <begin position="90"/>
        <end position="112"/>
    </location>
</feature>
<feature type="region of interest" description="Disordered" evidence="5">
    <location>
        <begin position="132"/>
        <end position="160"/>
    </location>
</feature>
<feature type="region of interest" description="Disordered" evidence="5">
    <location>
        <begin position="274"/>
        <end position="307"/>
    </location>
</feature>
<feature type="region of interest" description="Transactivation domain" evidence="1">
    <location>
        <begin position="290"/>
        <end position="506"/>
    </location>
</feature>
<feature type="region of interest" description="Disordered" evidence="5">
    <location>
        <begin position="356"/>
        <end position="416"/>
    </location>
</feature>
<feature type="compositionally biased region" description="Pro residues" evidence="5">
    <location>
        <begin position="1"/>
        <end position="38"/>
    </location>
</feature>
<feature type="compositionally biased region" description="Low complexity" evidence="5">
    <location>
        <begin position="39"/>
        <end position="50"/>
    </location>
</feature>
<feature type="compositionally biased region" description="Low complexity" evidence="5">
    <location>
        <begin position="147"/>
        <end position="156"/>
    </location>
</feature>
<feature type="compositionally biased region" description="Pro residues" evidence="5">
    <location>
        <begin position="279"/>
        <end position="289"/>
    </location>
</feature>
<feature type="compositionally biased region" description="Polar residues" evidence="5">
    <location>
        <begin position="371"/>
        <end position="393"/>
    </location>
</feature>
<feature type="compositionally biased region" description="Polar residues" evidence="5">
    <location>
        <begin position="401"/>
        <end position="411"/>
    </location>
</feature>
<feature type="modified residue" description="Phosphoserine" evidence="1">
    <location>
        <position position="60"/>
    </location>
</feature>
<feature type="modified residue" description="Phosphothreonine" evidence="1">
    <location>
        <position position="62"/>
    </location>
</feature>
<feature type="modified residue" description="Phosphoserine" evidence="3">
    <location>
        <position position="104"/>
    </location>
</feature>
<feature type="modified residue" description="Phosphoserine" evidence="1">
    <location>
        <position position="108"/>
    </location>
</feature>
<feature type="modified residue" description="Phosphothreonine" evidence="3">
    <location>
        <position position="109"/>
    </location>
</feature>
<feature type="modified residue" description="Phosphothreonine" evidence="1">
    <location>
        <position position="118"/>
    </location>
</feature>
<feature type="modified residue" description="Phosphoserine" evidence="7">
    <location>
        <position position="126"/>
    </location>
</feature>
<feature type="modified residue" description="Phosphoserine" evidence="1">
    <location>
        <position position="127"/>
    </location>
</feature>
<feature type="modified residue" description="Phosphoserine" evidence="1">
    <location>
        <position position="130"/>
    </location>
</feature>
<feature type="modified residue" description="Phosphoserine" evidence="1">
    <location>
        <position position="137"/>
    </location>
</feature>
<feature type="modified residue" description="Phosphoserine" evidence="1">
    <location>
        <position position="163"/>
    </location>
</feature>
<feature type="modified residue" description="Phosphoserine" evidence="1">
    <location>
        <position position="273"/>
    </location>
</feature>
<feature type="modified residue" description="Phosphoserine" evidence="1">
    <location>
        <position position="288"/>
    </location>
</feature>
<feature type="modified residue" description="Phosphoserine" evidence="1">
    <location>
        <position position="369"/>
    </location>
</feature>
<feature type="modified residue" description="Phosphoserine" evidence="1">
    <location>
        <position position="373"/>
    </location>
</feature>
<feature type="modified residue" description="Phosphoserine" evidence="1">
    <location>
        <position position="384"/>
    </location>
</feature>
<feature type="modified residue" description="Phosphoserine" evidence="1">
    <location>
        <position position="390"/>
    </location>
</feature>
<feature type="modified residue" description="Phosphoserine" evidence="1">
    <location>
        <position position="399"/>
    </location>
</feature>
<feature type="modified residue" description="Phosphoserine" evidence="1">
    <location>
        <position position="402"/>
    </location>
</feature>
<feature type="modified residue" description="Phosphoserine" evidence="1">
    <location>
        <position position="405"/>
    </location>
</feature>
<feature type="modified residue" description="Phosphotyrosine" evidence="7">
    <location>
        <position position="409"/>
    </location>
</feature>
<feature type="modified residue" description="Phosphothreonine" evidence="1">
    <location>
        <position position="414"/>
    </location>
</feature>
<accession>A0A8C0NGY6</accession>
<accession>A0A8I3MNH4</accession>
<name>YAP1_CANLF</name>
<sequence length="506" mass="54151">MDPGPPPPAAPPQAQGPPSAPPPPGQAPPSAPGPPAPPGSQAAPQAPPAGHQIVHVRGDSETDLEALFNAVMNPKTANVPQTVPMRLRKLPDSFFKPPEPKAHSRQASTDAGTAGALTPQHVRAHSSPASLQLGAVSPGTLTPTGVSSGPAAAPSAQHLRQSSFEIPDDVPLPAGWEMAKTSSGQRYFLNHIDQTTTWQDPRKAMLSQMSVTAPTSPPVQQSMMTSASGPLPDGWEQAMTQDGEIYYINHKNKTTSWLDPRLDPRFAMNQRISQSAPVKQPPPLAPQSPPGVLGGGGSSQQQQMRLQQLQMEKERLRLKQQELLRQVRPQAMRNISPSTANSPKCQELALRSQLPTLEQDGGTPNPVPSPGMSQELRTMTTSGSDPFLNSGTYHSRDESTDSGLSMSSYSVPRTPDDFLNSVDEMDTGDTINQSTLPSQQNRFPDYLEAIPGTNVDLGTLEGDGMNIEGEELMPSLQEALSSDILNDMESVLAATKLDKESFLTWL</sequence>
<gene>
    <name type="primary">YAP1</name>
</gene>
<reference evidence="9" key="1">
    <citation type="journal article" date="2005" name="Nature">
        <title>Genome sequence, comparative analysis and haplotype structure of the domestic dog.</title>
        <authorList>
            <person name="Lindblad-Toh K."/>
            <person name="Wade C.M."/>
            <person name="Mikkelsen T.S."/>
            <person name="Karlsson E.K."/>
            <person name="Jaffe D.B."/>
            <person name="Kamal M."/>
            <person name="Clamp M."/>
            <person name="Chang J.L."/>
            <person name="Kulbokas E.J. III"/>
            <person name="Zody M.C."/>
            <person name="Mauceli E."/>
            <person name="Xie X."/>
            <person name="Breen M."/>
            <person name="Wayne R.K."/>
            <person name="Ostrander E.A."/>
            <person name="Ponting C.P."/>
            <person name="Galibert F."/>
            <person name="Smith D.R."/>
            <person name="deJong P.J."/>
            <person name="Kirkness E.F."/>
            <person name="Alvarez P."/>
            <person name="Biagi T."/>
            <person name="Brockman W."/>
            <person name="Butler J."/>
            <person name="Chin C.-W."/>
            <person name="Cook A."/>
            <person name="Cuff J."/>
            <person name="Daly M.J."/>
            <person name="DeCaprio D."/>
            <person name="Gnerre S."/>
            <person name="Grabherr M."/>
            <person name="Kellis M."/>
            <person name="Kleber M."/>
            <person name="Bardeleben C."/>
            <person name="Goodstadt L."/>
            <person name="Heger A."/>
            <person name="Hitte C."/>
            <person name="Kim L."/>
            <person name="Koepfli K.-P."/>
            <person name="Parker H.G."/>
            <person name="Pollinger J.P."/>
            <person name="Searle S.M.J."/>
            <person name="Sutter N.B."/>
            <person name="Thomas R."/>
            <person name="Webber C."/>
            <person name="Baldwin J."/>
            <person name="Abebe A."/>
            <person name="Abouelleil A."/>
            <person name="Aftuck L."/>
            <person name="Ait-Zahra M."/>
            <person name="Aldredge T."/>
            <person name="Allen N."/>
            <person name="An P."/>
            <person name="Anderson S."/>
            <person name="Antoine C."/>
            <person name="Arachchi H."/>
            <person name="Aslam A."/>
            <person name="Ayotte L."/>
            <person name="Bachantsang P."/>
            <person name="Barry A."/>
            <person name="Bayul T."/>
            <person name="Benamara M."/>
            <person name="Berlin A."/>
            <person name="Bessette D."/>
            <person name="Blitshteyn B."/>
            <person name="Bloom T."/>
            <person name="Blye J."/>
            <person name="Boguslavskiy L."/>
            <person name="Bonnet C."/>
            <person name="Boukhgalter B."/>
            <person name="Brown A."/>
            <person name="Cahill P."/>
            <person name="Calixte N."/>
            <person name="Camarata J."/>
            <person name="Cheshatsang Y."/>
            <person name="Chu J."/>
            <person name="Citroen M."/>
            <person name="Collymore A."/>
            <person name="Cooke P."/>
            <person name="Dawoe T."/>
            <person name="Daza R."/>
            <person name="Decktor K."/>
            <person name="DeGray S."/>
            <person name="Dhargay N."/>
            <person name="Dooley K."/>
            <person name="Dooley K."/>
            <person name="Dorje P."/>
            <person name="Dorjee K."/>
            <person name="Dorris L."/>
            <person name="Duffey N."/>
            <person name="Dupes A."/>
            <person name="Egbiremolen O."/>
            <person name="Elong R."/>
            <person name="Falk J."/>
            <person name="Farina A."/>
            <person name="Faro S."/>
            <person name="Ferguson D."/>
            <person name="Ferreira P."/>
            <person name="Fisher S."/>
            <person name="FitzGerald M."/>
            <person name="Foley K."/>
            <person name="Foley C."/>
            <person name="Franke A."/>
            <person name="Friedrich D."/>
            <person name="Gage D."/>
            <person name="Garber M."/>
            <person name="Gearin G."/>
            <person name="Giannoukos G."/>
            <person name="Goode T."/>
            <person name="Goyette A."/>
            <person name="Graham J."/>
            <person name="Grandbois E."/>
            <person name="Gyaltsen K."/>
            <person name="Hafez N."/>
            <person name="Hagopian D."/>
            <person name="Hagos B."/>
            <person name="Hall J."/>
            <person name="Healy C."/>
            <person name="Hegarty R."/>
            <person name="Honan T."/>
            <person name="Horn A."/>
            <person name="Houde N."/>
            <person name="Hughes L."/>
            <person name="Hunnicutt L."/>
            <person name="Husby M."/>
            <person name="Jester B."/>
            <person name="Jones C."/>
            <person name="Kamat A."/>
            <person name="Kanga B."/>
            <person name="Kells C."/>
            <person name="Khazanovich D."/>
            <person name="Kieu A.C."/>
            <person name="Kisner P."/>
            <person name="Kumar M."/>
            <person name="Lance K."/>
            <person name="Landers T."/>
            <person name="Lara M."/>
            <person name="Lee W."/>
            <person name="Leger J.-P."/>
            <person name="Lennon N."/>
            <person name="Leuper L."/>
            <person name="LeVine S."/>
            <person name="Liu J."/>
            <person name="Liu X."/>
            <person name="Lokyitsang Y."/>
            <person name="Lokyitsang T."/>
            <person name="Lui A."/>
            <person name="Macdonald J."/>
            <person name="Major J."/>
            <person name="Marabella R."/>
            <person name="Maru K."/>
            <person name="Matthews C."/>
            <person name="McDonough S."/>
            <person name="Mehta T."/>
            <person name="Meldrim J."/>
            <person name="Melnikov A."/>
            <person name="Meneus L."/>
            <person name="Mihalev A."/>
            <person name="Mihova T."/>
            <person name="Miller K."/>
            <person name="Mittelman R."/>
            <person name="Mlenga V."/>
            <person name="Mulrain L."/>
            <person name="Munson G."/>
            <person name="Navidi A."/>
            <person name="Naylor J."/>
            <person name="Nguyen T."/>
            <person name="Nguyen N."/>
            <person name="Nguyen C."/>
            <person name="Nguyen T."/>
            <person name="Nicol R."/>
            <person name="Norbu N."/>
            <person name="Norbu C."/>
            <person name="Novod N."/>
            <person name="Nyima T."/>
            <person name="Olandt P."/>
            <person name="O'Neill B."/>
            <person name="O'Neill K."/>
            <person name="Osman S."/>
            <person name="Oyono L."/>
            <person name="Patti C."/>
            <person name="Perrin D."/>
            <person name="Phunkhang P."/>
            <person name="Pierre F."/>
            <person name="Priest M."/>
            <person name="Rachupka A."/>
            <person name="Raghuraman S."/>
            <person name="Rameau R."/>
            <person name="Ray V."/>
            <person name="Raymond C."/>
            <person name="Rege F."/>
            <person name="Rise C."/>
            <person name="Rogers J."/>
            <person name="Rogov P."/>
            <person name="Sahalie J."/>
            <person name="Settipalli S."/>
            <person name="Sharpe T."/>
            <person name="Shea T."/>
            <person name="Sheehan M."/>
            <person name="Sherpa N."/>
            <person name="Shi J."/>
            <person name="Shih D."/>
            <person name="Sloan J."/>
            <person name="Smith C."/>
            <person name="Sparrow T."/>
            <person name="Stalker J."/>
            <person name="Stange-Thomann N."/>
            <person name="Stavropoulos S."/>
            <person name="Stone C."/>
            <person name="Stone S."/>
            <person name="Sykes S."/>
            <person name="Tchuinga P."/>
            <person name="Tenzing P."/>
            <person name="Tesfaye S."/>
            <person name="Thoulutsang D."/>
            <person name="Thoulutsang Y."/>
            <person name="Topham K."/>
            <person name="Topping I."/>
            <person name="Tsamla T."/>
            <person name="Vassiliev H."/>
            <person name="Venkataraman V."/>
            <person name="Vo A."/>
            <person name="Wangchuk T."/>
            <person name="Wangdi T."/>
            <person name="Weiand M."/>
            <person name="Wilkinson J."/>
            <person name="Wilson A."/>
            <person name="Yadav S."/>
            <person name="Yang S."/>
            <person name="Yang X."/>
            <person name="Young G."/>
            <person name="Yu Q."/>
            <person name="Zainoun J."/>
            <person name="Zembek L."/>
            <person name="Zimmer A."/>
            <person name="Lander E.S."/>
        </authorList>
    </citation>
    <scope>NUCLEOTIDE SEQUENCE [LARGE SCALE GENOMIC DNA]</scope>
    <source>
        <strain evidence="9">Boxer</strain>
    </source>
</reference>
<reference evidence="8" key="2">
    <citation type="journal article" date="2011" name="Genes Dev.">
        <title>Angiomotin is a novel Hippo pathway component that inhibits YAP oncoprotein.</title>
        <authorList>
            <person name="Zhao B."/>
            <person name="Li L."/>
            <person name="Lu Q."/>
            <person name="Wang L.H."/>
            <person name="Liu C.Y."/>
            <person name="Lei Q."/>
            <person name="Guan K.L."/>
        </authorList>
    </citation>
    <scope>INTERACTION WITH AMOTL2</scope>
    <scope>SUBCELLULAR LOCATION</scope>
</reference>
<reference evidence="8" key="3">
    <citation type="journal article" date="2021" name="Cell Chem. Biol.">
        <title>Scribble sub-cellular localization modulates recruitment of YES1 to regulate YAP1 phosphorylation.</title>
        <authorList>
            <person name="Zhao D."/>
            <person name="Yin Z."/>
            <person name="Soellner M.B."/>
            <person name="Martin B.R."/>
        </authorList>
    </citation>
    <scope>SUBCELLULAR LOCATION</scope>
    <scope>PHOSPHORYLATION AT SER-126 AND TYR-409</scope>
</reference>
<dbReference type="RefSeq" id="XP_038368538.1">
    <property type="nucleotide sequence ID" value="XM_038512610.1"/>
</dbReference>
<dbReference type="RefSeq" id="XP_038392285.1">
    <property type="nucleotide sequence ID" value="XM_038536357.1"/>
</dbReference>
<dbReference type="RefSeq" id="XP_038521023.1">
    <property type="nucleotide sequence ID" value="XM_038665095.1"/>
</dbReference>
<dbReference type="SMR" id="A0A8C0NGY6"/>
<dbReference type="Ensembl" id="ENSCAFT00030027924.1">
    <property type="protein sequence ID" value="ENSCAFP00030024373.1"/>
    <property type="gene ID" value="ENSCAFG00030014761.1"/>
</dbReference>
<dbReference type="Ensembl" id="ENSCAFT00040040205.1">
    <property type="protein sequence ID" value="ENSCAFP00040035088.1"/>
    <property type="gene ID" value="ENSCAFG00040021391.1"/>
</dbReference>
<dbReference type="Ensembl" id="ENSCAFT00805006789">
    <property type="protein sequence ID" value="ENSCAFP00805005274"/>
    <property type="gene ID" value="ENSCAFG00805003646"/>
</dbReference>
<dbReference type="Ensembl" id="ENSCAFT00845002005.1">
    <property type="protein sequence ID" value="ENSCAFP00845001572.1"/>
    <property type="gene ID" value="ENSCAFG00845001157.1"/>
</dbReference>
<dbReference type="GeneID" id="479465"/>
<dbReference type="GeneTree" id="ENSGT00510000046760"/>
<dbReference type="OrthoDB" id="3045089at2759"/>
<dbReference type="Reactome" id="R-CFA-1251985">
    <property type="pathway name" value="Nuclear signaling by ERBB4"/>
</dbReference>
<dbReference type="Reactome" id="R-CFA-2028269">
    <property type="pathway name" value="Signaling by Hippo"/>
</dbReference>
<dbReference type="Reactome" id="R-CFA-2032785">
    <property type="pathway name" value="YAP1- and WWTR1 (TAZ)-stimulated gene expression"/>
</dbReference>
<dbReference type="Reactome" id="R-CFA-8939236">
    <property type="pathway name" value="RUNX1 regulates transcription of genes involved in differentiation of HSCs"/>
</dbReference>
<dbReference type="Reactome" id="R-CFA-8951671">
    <property type="pathway name" value="RUNX3 regulates YAP1-mediated transcription"/>
</dbReference>
<dbReference type="Reactome" id="R-CFA-9860927">
    <property type="pathway name" value="Turbulent (oscillatory, disturbed) flow shear stress activates signaling by PIEZO1 and integrins in endothelial cells"/>
</dbReference>
<dbReference type="Proteomes" id="UP000002254">
    <property type="component" value="Unplaced"/>
</dbReference>
<dbReference type="Proteomes" id="UP000694429">
    <property type="component" value="Chromosome 5"/>
</dbReference>
<dbReference type="Proteomes" id="UP000694542">
    <property type="component" value="Chromosome 5"/>
</dbReference>
<dbReference type="Proteomes" id="UP000805418">
    <property type="component" value="Chromosome 5"/>
</dbReference>
<dbReference type="GO" id="GO:0005923">
    <property type="term" value="C:bicellular tight junction"/>
    <property type="evidence" value="ECO:0007669"/>
    <property type="project" value="UniProtKB-SubCell"/>
</dbReference>
<dbReference type="GO" id="GO:0005737">
    <property type="term" value="C:cytoplasm"/>
    <property type="evidence" value="ECO:0000314"/>
    <property type="project" value="UniProtKB"/>
</dbReference>
<dbReference type="GO" id="GO:0005829">
    <property type="term" value="C:cytosol"/>
    <property type="evidence" value="ECO:0007669"/>
    <property type="project" value="Ensembl"/>
</dbReference>
<dbReference type="GO" id="GO:0001674">
    <property type="term" value="C:female germ cell nucleus"/>
    <property type="evidence" value="ECO:0007669"/>
    <property type="project" value="Ensembl"/>
</dbReference>
<dbReference type="GO" id="GO:0005739">
    <property type="term" value="C:mitochondrion"/>
    <property type="evidence" value="ECO:0007669"/>
    <property type="project" value="Ensembl"/>
</dbReference>
<dbReference type="GO" id="GO:0005654">
    <property type="term" value="C:nucleoplasm"/>
    <property type="evidence" value="ECO:0007669"/>
    <property type="project" value="Ensembl"/>
</dbReference>
<dbReference type="GO" id="GO:0005634">
    <property type="term" value="C:nucleus"/>
    <property type="evidence" value="ECO:0000314"/>
    <property type="project" value="UniProtKB"/>
</dbReference>
<dbReference type="GO" id="GO:0005886">
    <property type="term" value="C:plasma membrane"/>
    <property type="evidence" value="ECO:0007669"/>
    <property type="project" value="Ensembl"/>
</dbReference>
<dbReference type="GO" id="GO:0140552">
    <property type="term" value="C:TEAD-YAP complex"/>
    <property type="evidence" value="ECO:0007669"/>
    <property type="project" value="Ensembl"/>
</dbReference>
<dbReference type="GO" id="GO:0070160">
    <property type="term" value="C:tight junction"/>
    <property type="evidence" value="ECO:0000314"/>
    <property type="project" value="UniProtKB"/>
</dbReference>
<dbReference type="GO" id="GO:0003682">
    <property type="term" value="F:chromatin binding"/>
    <property type="evidence" value="ECO:0007669"/>
    <property type="project" value="Ensembl"/>
</dbReference>
<dbReference type="GO" id="GO:0140297">
    <property type="term" value="F:DNA-binding transcription factor binding"/>
    <property type="evidence" value="ECO:0007669"/>
    <property type="project" value="Ensembl"/>
</dbReference>
<dbReference type="GO" id="GO:0070064">
    <property type="term" value="F:proline-rich region binding"/>
    <property type="evidence" value="ECO:0007669"/>
    <property type="project" value="Ensembl"/>
</dbReference>
<dbReference type="GO" id="GO:0000978">
    <property type="term" value="F:RNA polymerase II cis-regulatory region sequence-specific DNA binding"/>
    <property type="evidence" value="ECO:0007669"/>
    <property type="project" value="Ensembl"/>
</dbReference>
<dbReference type="GO" id="GO:0003713">
    <property type="term" value="F:transcription coactivator activity"/>
    <property type="evidence" value="ECO:0007669"/>
    <property type="project" value="Ensembl"/>
</dbReference>
<dbReference type="GO" id="GO:0003714">
    <property type="term" value="F:transcription corepressor activity"/>
    <property type="evidence" value="ECO:0007669"/>
    <property type="project" value="Ensembl"/>
</dbReference>
<dbReference type="GO" id="GO:0060449">
    <property type="term" value="P:bud elongation involved in lung branching"/>
    <property type="evidence" value="ECO:0007669"/>
    <property type="project" value="Ensembl"/>
</dbReference>
<dbReference type="GO" id="GO:0060070">
    <property type="term" value="P:canonical Wnt signaling pathway"/>
    <property type="evidence" value="ECO:0007669"/>
    <property type="project" value="Ensembl"/>
</dbReference>
<dbReference type="GO" id="GO:0061026">
    <property type="term" value="P:cardiac muscle tissue regeneration"/>
    <property type="evidence" value="ECO:0007669"/>
    <property type="project" value="Ensembl"/>
</dbReference>
<dbReference type="GO" id="GO:0000902">
    <property type="term" value="P:cell morphogenesis"/>
    <property type="evidence" value="ECO:0007669"/>
    <property type="project" value="Ensembl"/>
</dbReference>
<dbReference type="GO" id="GO:0071480">
    <property type="term" value="P:cellular response to gamma radiation"/>
    <property type="evidence" value="ECO:0007669"/>
    <property type="project" value="Ensembl"/>
</dbReference>
<dbReference type="GO" id="GO:0071300">
    <property type="term" value="P:cellular response to retinoic acid"/>
    <property type="evidence" value="ECO:0007669"/>
    <property type="project" value="Ensembl"/>
</dbReference>
<dbReference type="GO" id="GO:0006974">
    <property type="term" value="P:DNA damage response"/>
    <property type="evidence" value="ECO:0007669"/>
    <property type="project" value="Ensembl"/>
</dbReference>
<dbReference type="GO" id="GO:0003143">
    <property type="term" value="P:embryonic heart tube morphogenesis"/>
    <property type="evidence" value="ECO:0007669"/>
    <property type="project" value="Ensembl"/>
</dbReference>
<dbReference type="GO" id="GO:1903703">
    <property type="term" value="P:enterocyte differentiation"/>
    <property type="evidence" value="ECO:0007669"/>
    <property type="project" value="Ensembl"/>
</dbReference>
<dbReference type="GO" id="GO:0050673">
    <property type="term" value="P:epithelial cell proliferation"/>
    <property type="evidence" value="ECO:0007669"/>
    <property type="project" value="Ensembl"/>
</dbReference>
<dbReference type="GO" id="GO:0097191">
    <property type="term" value="P:extrinsic apoptotic signaling pathway"/>
    <property type="evidence" value="ECO:0007669"/>
    <property type="project" value="Ensembl"/>
</dbReference>
<dbReference type="GO" id="GO:0002067">
    <property type="term" value="P:glandular epithelial cell differentiation"/>
    <property type="evidence" value="ECO:0007669"/>
    <property type="project" value="Ensembl"/>
</dbReference>
<dbReference type="GO" id="GO:0003015">
    <property type="term" value="P:heart process"/>
    <property type="evidence" value="ECO:0007669"/>
    <property type="project" value="Ensembl"/>
</dbReference>
<dbReference type="GO" id="GO:0035329">
    <property type="term" value="P:hippo signaling"/>
    <property type="evidence" value="ECO:0007669"/>
    <property type="project" value="Ensembl"/>
</dbReference>
<dbReference type="GO" id="GO:0070102">
    <property type="term" value="P:interleukin-6-mediated signaling pathway"/>
    <property type="evidence" value="ECO:0007669"/>
    <property type="project" value="Ensembl"/>
</dbReference>
<dbReference type="GO" id="GO:0060576">
    <property type="term" value="P:intestinal epithelial cell development"/>
    <property type="evidence" value="ECO:0007669"/>
    <property type="project" value="Ensembl"/>
</dbReference>
<dbReference type="GO" id="GO:0030216">
    <property type="term" value="P:keratinocyte differentiation"/>
    <property type="evidence" value="ECO:0007669"/>
    <property type="project" value="Ensembl"/>
</dbReference>
<dbReference type="GO" id="GO:0048368">
    <property type="term" value="P:lateral mesoderm development"/>
    <property type="evidence" value="ECO:0007669"/>
    <property type="project" value="Ensembl"/>
</dbReference>
<dbReference type="GO" id="GO:0060487">
    <property type="term" value="P:lung epithelial cell differentiation"/>
    <property type="evidence" value="ECO:0007669"/>
    <property type="project" value="Ensembl"/>
</dbReference>
<dbReference type="GO" id="GO:1902018">
    <property type="term" value="P:negative regulation of cilium assembly"/>
    <property type="evidence" value="ECO:0007669"/>
    <property type="project" value="Ensembl"/>
</dbReference>
<dbReference type="GO" id="GO:1904036">
    <property type="term" value="P:negative regulation of epithelial cell apoptotic process"/>
    <property type="evidence" value="ECO:0007669"/>
    <property type="project" value="Ensembl"/>
</dbReference>
<dbReference type="GO" id="GO:0030857">
    <property type="term" value="P:negative regulation of epithelial cell differentiation"/>
    <property type="evidence" value="ECO:0007669"/>
    <property type="project" value="Ensembl"/>
</dbReference>
<dbReference type="GO" id="GO:2001237">
    <property type="term" value="P:negative regulation of extrinsic apoptotic signaling pathway"/>
    <property type="evidence" value="ECO:0007669"/>
    <property type="project" value="Ensembl"/>
</dbReference>
<dbReference type="GO" id="GO:0045599">
    <property type="term" value="P:negative regulation of fat cell differentiation"/>
    <property type="evidence" value="ECO:0007669"/>
    <property type="project" value="Ensembl"/>
</dbReference>
<dbReference type="GO" id="GO:0010629">
    <property type="term" value="P:negative regulation of gene expression"/>
    <property type="evidence" value="ECO:0007669"/>
    <property type="project" value="Ensembl"/>
</dbReference>
<dbReference type="GO" id="GO:2000737">
    <property type="term" value="P:negative regulation of stem cell differentiation"/>
    <property type="evidence" value="ECO:0007669"/>
    <property type="project" value="Ensembl"/>
</dbReference>
<dbReference type="GO" id="GO:0000122">
    <property type="term" value="P:negative regulation of transcription by RNA polymerase II"/>
    <property type="evidence" value="ECO:0007669"/>
    <property type="project" value="Ensembl"/>
</dbReference>
<dbReference type="GO" id="GO:0030903">
    <property type="term" value="P:notochord development"/>
    <property type="evidence" value="ECO:0007669"/>
    <property type="project" value="Ensembl"/>
</dbReference>
<dbReference type="GO" id="GO:0035265">
    <property type="term" value="P:organ growth"/>
    <property type="evidence" value="ECO:0007669"/>
    <property type="project" value="Ensembl"/>
</dbReference>
<dbReference type="GO" id="GO:0048339">
    <property type="term" value="P:paraxial mesoderm development"/>
    <property type="evidence" value="ECO:0007669"/>
    <property type="project" value="Ensembl"/>
</dbReference>
<dbReference type="GO" id="GO:0090263">
    <property type="term" value="P:positive regulation of canonical Wnt signaling pathway"/>
    <property type="evidence" value="ECO:0007669"/>
    <property type="project" value="Ensembl"/>
</dbReference>
<dbReference type="GO" id="GO:0060045">
    <property type="term" value="P:positive regulation of cardiac muscle cell proliferation"/>
    <property type="evidence" value="ECO:0007669"/>
    <property type="project" value="Ensembl"/>
</dbReference>
<dbReference type="GO" id="GO:0030307">
    <property type="term" value="P:positive regulation of cell growth"/>
    <property type="evidence" value="ECO:0007669"/>
    <property type="project" value="Ensembl"/>
</dbReference>
<dbReference type="GO" id="GO:0050679">
    <property type="term" value="P:positive regulation of epithelial cell proliferation"/>
    <property type="evidence" value="ECO:0007669"/>
    <property type="project" value="Ensembl"/>
</dbReference>
<dbReference type="GO" id="GO:0010628">
    <property type="term" value="P:positive regulation of gene expression"/>
    <property type="evidence" value="ECO:0007669"/>
    <property type="project" value="Ensembl"/>
</dbReference>
<dbReference type="GO" id="GO:0045747">
    <property type="term" value="P:positive regulation of Notch signaling pathway"/>
    <property type="evidence" value="ECO:0007669"/>
    <property type="project" value="Ensembl"/>
</dbReference>
<dbReference type="GO" id="GO:0045669">
    <property type="term" value="P:positive regulation of osteoblast differentiation"/>
    <property type="evidence" value="ECO:0007669"/>
    <property type="project" value="Ensembl"/>
</dbReference>
<dbReference type="GO" id="GO:1900182">
    <property type="term" value="P:positive regulation of protein localization to nucleus"/>
    <property type="evidence" value="ECO:0007669"/>
    <property type="project" value="Ensembl"/>
</dbReference>
<dbReference type="GO" id="GO:1902459">
    <property type="term" value="P:positive regulation of stem cell population maintenance"/>
    <property type="evidence" value="ECO:0007669"/>
    <property type="project" value="Ensembl"/>
</dbReference>
<dbReference type="GO" id="GO:0045944">
    <property type="term" value="P:positive regulation of transcription by RNA polymerase II"/>
    <property type="evidence" value="ECO:0007669"/>
    <property type="project" value="Ensembl"/>
</dbReference>
<dbReference type="GO" id="GO:0065003">
    <property type="term" value="P:protein-containing complex assembly"/>
    <property type="evidence" value="ECO:0007669"/>
    <property type="project" value="Ensembl"/>
</dbReference>
<dbReference type="GO" id="GO:0010837">
    <property type="term" value="P:regulation of keratinocyte proliferation"/>
    <property type="evidence" value="ECO:0007669"/>
    <property type="project" value="Ensembl"/>
</dbReference>
<dbReference type="GO" id="GO:0072307">
    <property type="term" value="P:regulation of metanephric nephron tubule epithelial cell differentiation"/>
    <property type="evidence" value="ECO:0007669"/>
    <property type="project" value="Ensembl"/>
</dbReference>
<dbReference type="GO" id="GO:0050767">
    <property type="term" value="P:regulation of neurogenesis"/>
    <property type="evidence" value="ECO:0007669"/>
    <property type="project" value="Ensembl"/>
</dbReference>
<dbReference type="GO" id="GO:0072091">
    <property type="term" value="P:regulation of stem cell proliferation"/>
    <property type="evidence" value="ECO:0007669"/>
    <property type="project" value="Ensembl"/>
</dbReference>
<dbReference type="GO" id="GO:0032570">
    <property type="term" value="P:response to progesterone"/>
    <property type="evidence" value="ECO:0007669"/>
    <property type="project" value="Ensembl"/>
</dbReference>
<dbReference type="GO" id="GO:0035019">
    <property type="term" value="P:somatic stem cell population maintenance"/>
    <property type="evidence" value="ECO:0007669"/>
    <property type="project" value="Ensembl"/>
</dbReference>
<dbReference type="GO" id="GO:0001894">
    <property type="term" value="P:tissue homeostasis"/>
    <property type="evidence" value="ECO:0007669"/>
    <property type="project" value="Ensembl"/>
</dbReference>
<dbReference type="GO" id="GO:0001829">
    <property type="term" value="P:trophectodermal cell differentiation"/>
    <property type="evidence" value="ECO:0007669"/>
    <property type="project" value="Ensembl"/>
</dbReference>
<dbReference type="GO" id="GO:0001570">
    <property type="term" value="P:vasculogenesis"/>
    <property type="evidence" value="ECO:0007669"/>
    <property type="project" value="Ensembl"/>
</dbReference>
<dbReference type="GO" id="GO:0042060">
    <property type="term" value="P:wound healing"/>
    <property type="evidence" value="ECO:0007669"/>
    <property type="project" value="Ensembl"/>
</dbReference>
<dbReference type="CDD" id="cd00201">
    <property type="entry name" value="WW"/>
    <property type="match status" value="2"/>
</dbReference>
<dbReference type="FunFam" id="2.20.70.10:FF:000019">
    <property type="entry name" value="Putative transcriptional coactivator YAP1"/>
    <property type="match status" value="1"/>
</dbReference>
<dbReference type="FunFam" id="2.20.70.10:FF:000012">
    <property type="entry name" value="transcriptional coactivator YAP1 isoform X2"/>
    <property type="match status" value="1"/>
</dbReference>
<dbReference type="Gene3D" id="2.20.70.10">
    <property type="match status" value="2"/>
</dbReference>
<dbReference type="Gene3D" id="6.20.430.10">
    <property type="match status" value="1"/>
</dbReference>
<dbReference type="InterPro" id="IPR053819">
    <property type="entry name" value="TEADIR3_omega_loop"/>
</dbReference>
<dbReference type="InterPro" id="IPR001202">
    <property type="entry name" value="WW_dom"/>
</dbReference>
<dbReference type="InterPro" id="IPR036020">
    <property type="entry name" value="WW_dom_sf"/>
</dbReference>
<dbReference type="InterPro" id="IPR051583">
    <property type="entry name" value="YAP1"/>
</dbReference>
<dbReference type="PANTHER" id="PTHR17616:SF9">
    <property type="entry name" value="TRANSCRIPTIONAL COACTIVATOR YAP1"/>
    <property type="match status" value="1"/>
</dbReference>
<dbReference type="PANTHER" id="PTHR17616">
    <property type="entry name" value="YES-ASSOCIATED PROTEIN YAP1 FAMILY MEMBER"/>
    <property type="match status" value="1"/>
</dbReference>
<dbReference type="Pfam" id="PF15238">
    <property type="entry name" value="TEADIR3"/>
    <property type="match status" value="1"/>
</dbReference>
<dbReference type="Pfam" id="PF00397">
    <property type="entry name" value="WW"/>
    <property type="match status" value="2"/>
</dbReference>
<dbReference type="SMART" id="SM00456">
    <property type="entry name" value="WW"/>
    <property type="match status" value="2"/>
</dbReference>
<dbReference type="SUPFAM" id="SSF51045">
    <property type="entry name" value="WW domain"/>
    <property type="match status" value="2"/>
</dbReference>
<dbReference type="PROSITE" id="PS01159">
    <property type="entry name" value="WW_DOMAIN_1"/>
    <property type="match status" value="2"/>
</dbReference>
<dbReference type="PROSITE" id="PS50020">
    <property type="entry name" value="WW_DOMAIN_2"/>
    <property type="match status" value="2"/>
</dbReference>
<protein>
    <recommendedName>
        <fullName evidence="8">Transcriptional coactivator YAP1</fullName>
        <shortName evidence="1">Yes-associated protein 1</shortName>
    </recommendedName>
</protein>
<keyword id="KW-0010">Activator</keyword>
<keyword id="KW-0965">Cell junction</keyword>
<keyword id="KW-0963">Cytoplasm</keyword>
<keyword id="KW-0539">Nucleus</keyword>
<keyword id="KW-0597">Phosphoprotein</keyword>
<keyword id="KW-1185">Reference proteome</keyword>
<keyword id="KW-0677">Repeat</keyword>
<keyword id="KW-0678">Repressor</keyword>
<keyword id="KW-0796">Tight junction</keyword>
<keyword id="KW-0804">Transcription</keyword>
<keyword id="KW-0805">Transcription regulation</keyword>
<keyword id="KW-0832">Ubl conjugation</keyword>
<evidence type="ECO:0000250" key="1">
    <source>
        <dbReference type="UniProtKB" id="P46937"/>
    </source>
</evidence>
<evidence type="ECO:0000250" key="2">
    <source>
        <dbReference type="UniProtKB" id="P46938"/>
    </source>
</evidence>
<evidence type="ECO:0000250" key="3">
    <source>
        <dbReference type="UniProtKB" id="Q2EJA0"/>
    </source>
</evidence>
<evidence type="ECO:0000255" key="4">
    <source>
        <dbReference type="PROSITE-ProRule" id="PRU00224"/>
    </source>
</evidence>
<evidence type="ECO:0000256" key="5">
    <source>
        <dbReference type="SAM" id="MobiDB-lite"/>
    </source>
</evidence>
<evidence type="ECO:0000269" key="6">
    <source>
    </source>
</evidence>
<evidence type="ECO:0000269" key="7">
    <source>
    </source>
</evidence>
<evidence type="ECO:0000305" key="8"/>
<evidence type="ECO:0000312" key="9">
    <source>
        <dbReference type="Proteomes" id="UP000002254"/>
    </source>
</evidence>
<evidence type="ECO:0000312" key="10">
    <source>
        <dbReference type="Proteomes" id="UP000694429"/>
    </source>
</evidence>
<organism evidence="10">
    <name type="scientific">Canis lupus familiaris</name>
    <name type="common">Dog</name>
    <name type="synonym">Canis familiaris</name>
    <dbReference type="NCBI Taxonomy" id="9615"/>
    <lineage>
        <taxon>Eukaryota</taxon>
        <taxon>Metazoa</taxon>
        <taxon>Chordata</taxon>
        <taxon>Craniata</taxon>
        <taxon>Vertebrata</taxon>
        <taxon>Euteleostomi</taxon>
        <taxon>Mammalia</taxon>
        <taxon>Eutheria</taxon>
        <taxon>Laurasiatheria</taxon>
        <taxon>Carnivora</taxon>
        <taxon>Caniformia</taxon>
        <taxon>Canidae</taxon>
        <taxon>Canis</taxon>
    </lineage>
</organism>
<comment type="function">
    <text evidence="1 2 3">Transcriptional regulator with dual roles as a coactivator and corepressor. Critical downstream regulatory target in the Hippo signaling pathway, crucial for organ size control and tumor suppression by restricting proliferation and promoting apoptosis (By similarity). The Hippo signaling pathway core involves a kinase cascade featuring STK3/MST2 and STK4/MST1, along with its regulatory partner SAV1, which phosphorylates and activates LATS1/2 in complex with their regulatory protein, MOB1. This activation leads to the phosphorylation and inactivation of the YAP1 oncoprotein and WWTR1/TAZ (By similarity). Phosphorylation of YAP1 by LATS1/2 prevents its nuclear translocation, thereby regulating the expression of its target genes (By similarity). The transcriptional regulation of gene expression requires TEAD transcription factors and modulates cell growth, anchorage-independent growth, and induction of epithelial-mesenchymal transition (EMT) (By similarity). Plays a key role in tissue tension and 3D tissue shape by regulating the cortical actomyosin network, acting via ARHGAP18, a Rho GTPase activating protein that suppresses F-actin polymerization (By similarity). It also suppresses ciliogenesis by acting as a transcriptional corepressor of TEAD4 target genes AURKA and PLK1 (By similarity). In conjunction with WWTR1, regulates TGFB1-dependent SMAD2 and SMAD3 nuclear accumulation (By similarity). Synergizes with WBP2 to enhance PGR activity (By similarity).</text>
</comment>
<comment type="subunit">
    <text evidence="1 2 6">Binds to the SH3 domain of the YES kinase. Binds to WBP1 and WBP2 (By similarity). Binds, in vitro, through the WW1 domain, to neural isoforms of ENAH that contain the PPSY motif (By similarity). The phosphorylated form interacts with YWHAB (By similarity). Interacts (via WW domains) with LATS1 (via PPxY motif 2) (By similarity). Interacts with LATS2 (By similarity). Interacts with TEAD1, TEAD2 and TEAD3 (By similarity). Interacts wih TEAD4 (By similarity). Interacts with TP73 (By similarity). Interacts with RUNX1 (By similarity). Interacts with HCK (By similarity). Interacts (via WW domains) with PTPN14 (via PPxY motif 2); this interaction leads to the cytoplasmic sequestration of YAP1 and inhibits its transcriptional coactivator activity (By similarity). Interacts (when phosphorylated at Ser-112) with SMAD2, SMAD3 and WWTR1 (By similarity). Interacts with PRRG2 (via cytoplasmic domain) (By similarity). Interacts (via WW domains) with PRRG4 (via cytoplasmic domain) (By similarity). Interacts (phosphorylated) with CLDN18; the interaction sequesters YAP1 away from the nucleus and thereby restricts transcription of YAP1 target genes (By similarity). Interacts with SMAD1 (By similarity). Interacts with AMOT; the interaction facilitates translocation of YAP1 to the cytoplasm and tight junctions (By similarity). Interacts with AMOTL2, the interaction is required for ubiquitination of AMOTL2 and localization of YAP1 to tight junctions (PubMed:21205866).</text>
</comment>
<comment type="subcellular location">
    <subcellularLocation>
        <location evidence="6 7">Cytoplasm</location>
    </subcellularLocation>
    <subcellularLocation>
        <location evidence="7">Nucleus</location>
    </subcellularLocation>
    <subcellularLocation>
        <location evidence="6">Cell junction</location>
        <location evidence="6">Tight junction</location>
    </subcellularLocation>
    <text evidence="1 2 6 7">Both phosphorylation and cell density can regulate its subcellular localization (By similarity). Phosphorylation sequesters it in the cytoplasm by inhibiting its translocation into the nucleus (By similarity). At low density, predominantly nuclear and is translocated to the cytoplasm at high density (By similarity). PTPN14 induces translocation from the nucleus to the cytoplasm (By similarity). In the nucleus, phosphorylation by PRP4K induces nuclear exclusion (By similarity). Localized mainly to the nucleus in the early stages of embryo development with expression becoming evident in the cytoplasm at the blastocyst and epiblast stages (By similarity). Localizes to the cytoplasm and tight junctions following interaction with AMOT (By similarity). Localizes to tight junctions following interaction with AMOTL2 (PubMed:21205866). Translocates to the nucleus in the presence of SNAIL1 (PubMed:33730553).</text>
</comment>
<comment type="domain">
    <text evidence="1">The first coiled-coil region mediates most of the interaction with TEAD transcription factors.</text>
</comment>
<comment type="PTM">
    <text evidence="1">Phosphorylated by LATS1 and LATS2; leading to cytoplasmic translocation and inactivation (By similarity). Phosphorylated by ABL1; leading to YAP1 stabilization, enhanced interaction with TP73 and recruitment onto proapoptotic genes; in response to DNA damage (By similarity). Phosphorylation at Ser-402 and Ser-405 by CK1 is triggered by previous phosphorylation at Ser-399 by LATS proteins and leads to YAP1 ubiquitination by SCF(beta-TRCP) E3 ubiquitin ligase and subsequent degradation (By similarity). Phosphorylated at Thr-118, Ser-137, Ser-369 and Thr-414 by MAPK8/JNK1 and MAPK9/JNK2, which is required for the regulation of apoptosis by YAP1 (By similarity). Phosphorylated in the nucleus by PRP4K; phosphorylation leads to nuclear exclusion (By similarity).</text>
</comment>
<comment type="PTM">
    <text evidence="1">Ubiquitinated by SCF(beta-TRCP) E3 ubiquitin ligase.</text>
</comment>
<comment type="similarity">
    <text evidence="8">Belongs to the YAP1 family.</text>
</comment>
<proteinExistence type="evidence at protein level"/>